<gene>
    <name evidence="1" type="primary">hemE</name>
    <name type="ordered locus">Geob_0015</name>
</gene>
<comment type="function">
    <text evidence="1">Catalyzes the decarboxylation of four acetate groups of uroporphyrinogen-III to yield coproporphyrinogen-III.</text>
</comment>
<comment type="catalytic activity">
    <reaction evidence="1">
        <text>uroporphyrinogen III + 4 H(+) = coproporphyrinogen III + 4 CO2</text>
        <dbReference type="Rhea" id="RHEA:19865"/>
        <dbReference type="ChEBI" id="CHEBI:15378"/>
        <dbReference type="ChEBI" id="CHEBI:16526"/>
        <dbReference type="ChEBI" id="CHEBI:57308"/>
        <dbReference type="ChEBI" id="CHEBI:57309"/>
        <dbReference type="EC" id="4.1.1.37"/>
    </reaction>
</comment>
<comment type="pathway">
    <text evidence="1">Porphyrin-containing compound metabolism; protoporphyrin-IX biosynthesis; coproporphyrinogen-III from 5-aminolevulinate: step 4/4.</text>
</comment>
<comment type="subunit">
    <text evidence="1">Homodimer.</text>
</comment>
<comment type="subcellular location">
    <subcellularLocation>
        <location evidence="1">Cytoplasm</location>
    </subcellularLocation>
</comment>
<comment type="similarity">
    <text evidence="1">Belongs to the uroporphyrinogen decarboxylase family.</text>
</comment>
<feature type="chain" id="PRO_1000197526" description="Uroporphyrinogen decarboxylase">
    <location>
        <begin position="1"/>
        <end position="339"/>
    </location>
</feature>
<feature type="binding site" evidence="1">
    <location>
        <begin position="23"/>
        <end position="27"/>
    </location>
    <ligand>
        <name>substrate</name>
    </ligand>
</feature>
<feature type="binding site" evidence="1">
    <location>
        <position position="72"/>
    </location>
    <ligand>
        <name>substrate</name>
    </ligand>
</feature>
<feature type="binding site" evidence="1">
    <location>
        <position position="147"/>
    </location>
    <ligand>
        <name>substrate</name>
    </ligand>
</feature>
<feature type="binding site" evidence="1">
    <location>
        <position position="202"/>
    </location>
    <ligand>
        <name>substrate</name>
    </ligand>
</feature>
<feature type="binding site" evidence="1">
    <location>
        <position position="315"/>
    </location>
    <ligand>
        <name>substrate</name>
    </ligand>
</feature>
<feature type="site" description="Transition state stabilizer" evidence="1">
    <location>
        <position position="72"/>
    </location>
</feature>
<reference key="1">
    <citation type="submission" date="2009-01" db="EMBL/GenBank/DDBJ databases">
        <title>Complete sequence of Geobacter sp. FRC-32.</title>
        <authorList>
            <consortium name="US DOE Joint Genome Institute"/>
            <person name="Lucas S."/>
            <person name="Copeland A."/>
            <person name="Lapidus A."/>
            <person name="Glavina del Rio T."/>
            <person name="Dalin E."/>
            <person name="Tice H."/>
            <person name="Bruce D."/>
            <person name="Goodwin L."/>
            <person name="Pitluck S."/>
            <person name="Saunders E."/>
            <person name="Brettin T."/>
            <person name="Detter J.C."/>
            <person name="Han C."/>
            <person name="Larimer F."/>
            <person name="Land M."/>
            <person name="Hauser L."/>
            <person name="Kyrpides N."/>
            <person name="Ovchinnikova G."/>
            <person name="Kostka J."/>
            <person name="Richardson P."/>
        </authorList>
    </citation>
    <scope>NUCLEOTIDE SEQUENCE [LARGE SCALE GENOMIC DNA]</scope>
    <source>
        <strain>DSM 22248 / JCM 15807 / FRC-32</strain>
    </source>
</reference>
<sequence>MNTRFLDACWGKPVDRTPVWLMRQAGRYLPDYMRVRSKCTFLELCKTPELAAEVTIQPVDILGVDAAILFSDILTPVEPMGMALDFVPGPVFEHPIRTMADVEKLRIPQMEQDVPYVLETIKILRRELANKVPLIGFGGAPFTLACYMVEGKGSKDWATIKRMMYAAPEVYAALMEKVTMMDMEYLNAQIKAGAQAIQIFDTWGGVLSPSDYEKFVLPYTTKLINGLNRQNVPVIHFVKGAGTMLDTVKKAGGDVMGLDWHTNLGKARDILGSMAVQGNLDPTVLFAPNDVIEKEVKRVLDENGGRSGHIFNLGHGILPTVPPENAIHMVECVHRLSQQ</sequence>
<evidence type="ECO:0000255" key="1">
    <source>
        <dbReference type="HAMAP-Rule" id="MF_00218"/>
    </source>
</evidence>
<protein>
    <recommendedName>
        <fullName evidence="1">Uroporphyrinogen decarboxylase</fullName>
        <shortName evidence="1">UPD</shortName>
        <shortName evidence="1">URO-D</shortName>
        <ecNumber evidence="1">4.1.1.37</ecNumber>
    </recommendedName>
</protein>
<name>DCUP_GEODF</name>
<proteinExistence type="inferred from homology"/>
<keyword id="KW-0963">Cytoplasm</keyword>
<keyword id="KW-0210">Decarboxylase</keyword>
<keyword id="KW-0456">Lyase</keyword>
<keyword id="KW-0627">Porphyrin biosynthesis</keyword>
<keyword id="KW-1185">Reference proteome</keyword>
<organism>
    <name type="scientific">Geotalea daltonii (strain DSM 22248 / JCM 15807 / FRC-32)</name>
    <name type="common">Geobacter daltonii</name>
    <dbReference type="NCBI Taxonomy" id="316067"/>
    <lineage>
        <taxon>Bacteria</taxon>
        <taxon>Pseudomonadati</taxon>
        <taxon>Thermodesulfobacteriota</taxon>
        <taxon>Desulfuromonadia</taxon>
        <taxon>Geobacterales</taxon>
        <taxon>Geobacteraceae</taxon>
        <taxon>Geotalea</taxon>
    </lineage>
</organism>
<accession>B9M7T4</accession>
<dbReference type="EC" id="4.1.1.37" evidence="1"/>
<dbReference type="EMBL" id="CP001390">
    <property type="protein sequence ID" value="ACM18392.1"/>
    <property type="molecule type" value="Genomic_DNA"/>
</dbReference>
<dbReference type="RefSeq" id="WP_012645121.1">
    <property type="nucleotide sequence ID" value="NC_011979.1"/>
</dbReference>
<dbReference type="SMR" id="B9M7T4"/>
<dbReference type="STRING" id="316067.Geob_0015"/>
<dbReference type="KEGG" id="geo:Geob_0015"/>
<dbReference type="eggNOG" id="COG0407">
    <property type="taxonomic scope" value="Bacteria"/>
</dbReference>
<dbReference type="HOGENOM" id="CLU_040933_0_0_7"/>
<dbReference type="OrthoDB" id="9806656at2"/>
<dbReference type="UniPathway" id="UPA00251">
    <property type="reaction ID" value="UER00321"/>
</dbReference>
<dbReference type="Proteomes" id="UP000007721">
    <property type="component" value="Chromosome"/>
</dbReference>
<dbReference type="GO" id="GO:0005829">
    <property type="term" value="C:cytosol"/>
    <property type="evidence" value="ECO:0007669"/>
    <property type="project" value="TreeGrafter"/>
</dbReference>
<dbReference type="GO" id="GO:0004853">
    <property type="term" value="F:uroporphyrinogen decarboxylase activity"/>
    <property type="evidence" value="ECO:0007669"/>
    <property type="project" value="UniProtKB-UniRule"/>
</dbReference>
<dbReference type="GO" id="GO:0019353">
    <property type="term" value="P:protoporphyrinogen IX biosynthetic process from glutamate"/>
    <property type="evidence" value="ECO:0007669"/>
    <property type="project" value="TreeGrafter"/>
</dbReference>
<dbReference type="CDD" id="cd00717">
    <property type="entry name" value="URO-D"/>
    <property type="match status" value="1"/>
</dbReference>
<dbReference type="FunFam" id="3.20.20.210:FF:000015">
    <property type="entry name" value="Uroporphyrinogen decarboxylase"/>
    <property type="match status" value="1"/>
</dbReference>
<dbReference type="Gene3D" id="3.20.20.210">
    <property type="match status" value="1"/>
</dbReference>
<dbReference type="HAMAP" id="MF_00218">
    <property type="entry name" value="URO_D"/>
    <property type="match status" value="1"/>
</dbReference>
<dbReference type="InterPro" id="IPR038071">
    <property type="entry name" value="UROD/MetE-like_sf"/>
</dbReference>
<dbReference type="InterPro" id="IPR006361">
    <property type="entry name" value="Uroporphyrinogen_deCO2ase_HemE"/>
</dbReference>
<dbReference type="InterPro" id="IPR000257">
    <property type="entry name" value="Uroporphyrinogen_deCOase"/>
</dbReference>
<dbReference type="NCBIfam" id="TIGR01464">
    <property type="entry name" value="hemE"/>
    <property type="match status" value="1"/>
</dbReference>
<dbReference type="PANTHER" id="PTHR21091">
    <property type="entry name" value="METHYLTETRAHYDROFOLATE:HOMOCYSTEINE METHYLTRANSFERASE RELATED"/>
    <property type="match status" value="1"/>
</dbReference>
<dbReference type="PANTHER" id="PTHR21091:SF169">
    <property type="entry name" value="UROPORPHYRINOGEN DECARBOXYLASE"/>
    <property type="match status" value="1"/>
</dbReference>
<dbReference type="Pfam" id="PF01208">
    <property type="entry name" value="URO-D"/>
    <property type="match status" value="1"/>
</dbReference>
<dbReference type="SUPFAM" id="SSF51726">
    <property type="entry name" value="UROD/MetE-like"/>
    <property type="match status" value="1"/>
</dbReference>
<dbReference type="PROSITE" id="PS00906">
    <property type="entry name" value="UROD_1"/>
    <property type="match status" value="1"/>
</dbReference>
<dbReference type="PROSITE" id="PS00907">
    <property type="entry name" value="UROD_2"/>
    <property type="match status" value="1"/>
</dbReference>